<reference key="1">
    <citation type="journal article" date="2012" name="Peptides">
        <title>Identification and molecular characterization of three new K(+)-channel specific toxins from the Chinese scorpion Mesobuthus martensii Karsch revealing intronic number polymorphism and alternative splicing in duplicated genes.</title>
        <authorList>
            <person name="Zeng X.C."/>
            <person name="Zhang L."/>
            <person name="Nie Y."/>
            <person name="Luo X."/>
        </authorList>
    </citation>
    <scope>NUCLEOTIDE SEQUENCE [MRNA]</scope>
    <source>
        <tissue>Venom gland</tissue>
    </source>
</reference>
<keyword id="KW-1221">Calcium-activated potassium channel impairing toxin</keyword>
<keyword id="KW-1015">Disulfide bond</keyword>
<keyword id="KW-0872">Ion channel impairing toxin</keyword>
<keyword id="KW-0528">Neurotoxin</keyword>
<keyword id="KW-0632">Potassium channel impairing toxin</keyword>
<keyword id="KW-0873">Pyrrolidone carboxylic acid</keyword>
<keyword id="KW-0964">Secreted</keyword>
<keyword id="KW-0732">Signal</keyword>
<keyword id="KW-0800">Toxin</keyword>
<keyword id="KW-1220">Voltage-gated potassium channel impairing toxin</keyword>
<comment type="function">
    <text evidence="2">Potent blocker of both large-conductance calcium-activated potassium channels (KCa1.1/KCNMA1) and voltage-gated potassium channels (Kv1.3/KCNA3 and ERG1/Kv11.1/KCNH2).</text>
</comment>
<comment type="subcellular location">
    <subcellularLocation>
        <location evidence="2">Secreted</location>
    </subcellularLocation>
</comment>
<comment type="tissue specificity">
    <text evidence="4">Expressed by the venom gland.</text>
</comment>
<comment type="domain">
    <text evidence="2">Has the structural arrangement of an alpha-helix connected to a beta-sheet by disulfide bonds (CSalpha/beta).</text>
</comment>
<comment type="similarity">
    <text evidence="4">Belongs to the short scorpion toxin superfamily. Potassium channel inhibitor family. Alpha-KTx 01 subfamily.</text>
</comment>
<name>KAX1E_OLIMR</name>
<feature type="signal peptide" evidence="2">
    <location>
        <begin position="1"/>
        <end position="22"/>
    </location>
</feature>
<feature type="chain" id="PRO_0000417433" description="Potassium channel toxin alpha-KTx 1.14">
    <location>
        <begin position="23"/>
        <end position="59"/>
    </location>
</feature>
<feature type="site" description="Basic residue of the functional dyad" evidence="1">
    <location>
        <position position="49"/>
    </location>
</feature>
<feature type="site" description="Aromatic residue of the functional dyad" evidence="1">
    <location>
        <position position="58"/>
    </location>
</feature>
<feature type="modified residue" description="Pyrrolidone carboxylic acid" evidence="2">
    <location>
        <position position="23"/>
    </location>
</feature>
<feature type="disulfide bond" evidence="2">
    <location>
        <begin position="29"/>
        <end position="50"/>
    </location>
</feature>
<feature type="disulfide bond" evidence="2">
    <location>
        <begin position="35"/>
        <end position="55"/>
    </location>
</feature>
<feature type="disulfide bond" evidence="2">
    <location>
        <begin position="39"/>
        <end position="57"/>
    </location>
</feature>
<organism>
    <name type="scientific">Olivierus martensii</name>
    <name type="common">Manchurian scorpion</name>
    <name type="synonym">Mesobuthus martensii</name>
    <dbReference type="NCBI Taxonomy" id="34649"/>
    <lineage>
        <taxon>Eukaryota</taxon>
        <taxon>Metazoa</taxon>
        <taxon>Ecdysozoa</taxon>
        <taxon>Arthropoda</taxon>
        <taxon>Chelicerata</taxon>
        <taxon>Arachnida</taxon>
        <taxon>Scorpiones</taxon>
        <taxon>Buthida</taxon>
        <taxon>Buthoidea</taxon>
        <taxon>Buthidae</taxon>
        <taxon>Olivierus</taxon>
    </lineage>
</organism>
<sequence length="59" mass="6646">MKKISFLLLLAIVICSIGWTDGQFTDVRCSASSKCWPVCKKLFGTYKGKCKNSKCRCYS</sequence>
<protein>
    <recommendedName>
        <fullName>Potassium channel toxin alpha-KTx 1.14</fullName>
    </recommendedName>
    <alternativeName>
        <fullName evidence="3">BmKcug1</fullName>
        <shortName evidence="5">Kcug1</shortName>
    </alternativeName>
</protein>
<evidence type="ECO:0000250" key="1"/>
<evidence type="ECO:0000250" key="2">
    <source>
        <dbReference type="UniProtKB" id="Q9NII5"/>
    </source>
</evidence>
<evidence type="ECO:0000303" key="3">
    <source>
    </source>
</evidence>
<evidence type="ECO:0000305" key="4"/>
<evidence type="ECO:0000312" key="5">
    <source>
        <dbReference type="EMBL" id="AEX92701.1"/>
    </source>
</evidence>
<proteinExistence type="inferred from homology"/>
<accession>H2ETQ6</accession>
<dbReference type="EMBL" id="JQ074233">
    <property type="protein sequence ID" value="AEX92701.1"/>
    <property type="molecule type" value="mRNA"/>
</dbReference>
<dbReference type="SMR" id="H2ETQ6"/>
<dbReference type="GO" id="GO:0005576">
    <property type="term" value="C:extracellular region"/>
    <property type="evidence" value="ECO:0007669"/>
    <property type="project" value="UniProtKB-SubCell"/>
</dbReference>
<dbReference type="GO" id="GO:0008200">
    <property type="term" value="F:ion channel inhibitor activity"/>
    <property type="evidence" value="ECO:0007669"/>
    <property type="project" value="InterPro"/>
</dbReference>
<dbReference type="GO" id="GO:0015459">
    <property type="term" value="F:potassium channel regulator activity"/>
    <property type="evidence" value="ECO:0007669"/>
    <property type="project" value="UniProtKB-KW"/>
</dbReference>
<dbReference type="GO" id="GO:0090729">
    <property type="term" value="F:toxin activity"/>
    <property type="evidence" value="ECO:0007669"/>
    <property type="project" value="UniProtKB-KW"/>
</dbReference>
<dbReference type="Gene3D" id="3.30.30.10">
    <property type="entry name" value="Knottin, scorpion toxin-like"/>
    <property type="match status" value="1"/>
</dbReference>
<dbReference type="InterPro" id="IPR036574">
    <property type="entry name" value="Scorpion_toxin-like_sf"/>
</dbReference>
<dbReference type="InterPro" id="IPR001947">
    <property type="entry name" value="Scorpion_toxinS_K_inh"/>
</dbReference>
<dbReference type="Pfam" id="PF00451">
    <property type="entry name" value="Toxin_2"/>
    <property type="match status" value="1"/>
</dbReference>
<dbReference type="PRINTS" id="PR00286">
    <property type="entry name" value="CHARYBDTOXIN"/>
</dbReference>
<dbReference type="SUPFAM" id="SSF57095">
    <property type="entry name" value="Scorpion toxin-like"/>
    <property type="match status" value="1"/>
</dbReference>